<comment type="function">
    <text evidence="1 5 6">Major component of the axial/lateral elements of synaptonemal complexes (SCS) during meiotic prophase (PubMed:9592139, PubMed:9933407). Plays a role in the assembly of synaptonemal complexes. Required for normal meiotic chromosome synapsis during oocyte and spermatocyte development and for normal male and female fertility. Required for insertion of SYCP3 into synaptonemal complexes. May be involved in the organization of chromatin by temporarily binding to DNA scaffold attachment regions. Requires SYCP3, but not SYCP1, in order to be incorporated into the axial/lateral elements.</text>
</comment>
<comment type="subunit">
    <text evidence="1 4 5">Component of the lateral elements of synaptonemal complexes (PubMed:9592139, PubMed:9933407). Interacts with TEX11 (By similarity). Heterodimer with SYCP3. Interacts with SYCP3, SMC1A and SMC3 (PubMed:10652260).</text>
</comment>
<comment type="subcellular location">
    <subcellularLocation>
        <location evidence="6">Nucleus</location>
    </subcellularLocation>
    <subcellularLocation>
        <location evidence="5 6">Chromosome</location>
    </subcellularLocation>
    <text evidence="6">In axial/lateral elements of the tripartite segments of synaptonemal complexes.</text>
</comment>
<comment type="tissue specificity">
    <text evidence="5 6">Detected in spermatocytes and testis (at protein level) (PubMed:9592139, PubMed:9933407). Spermatocytes and oocytes. Meiotic prophase cells.</text>
</comment>
<comment type="developmental stage">
    <text evidence="5">Meiosis-specific. Highly expressed in meiotic prophase cells, low expression persists in spermatids.</text>
</comment>
<comment type="PTM">
    <text evidence="1">Phosphorylated.</text>
</comment>
<comment type="similarity">
    <text evidence="7">Belongs to the SYCP2 family.</text>
</comment>
<gene>
    <name type="primary">Sycp2</name>
    <name type="synonym">Scp2</name>
</gene>
<evidence type="ECO:0000250" key="1">
    <source>
        <dbReference type="UniProtKB" id="Q9CUU3"/>
    </source>
</evidence>
<evidence type="ECO:0000255" key="2"/>
<evidence type="ECO:0000256" key="3">
    <source>
        <dbReference type="SAM" id="MobiDB-lite"/>
    </source>
</evidence>
<evidence type="ECO:0000269" key="4">
    <source>
    </source>
</evidence>
<evidence type="ECO:0000269" key="5">
    <source>
    </source>
</evidence>
<evidence type="ECO:0000269" key="6">
    <source>
    </source>
</evidence>
<evidence type="ECO:0000305" key="7"/>
<evidence type="ECO:0007744" key="8">
    <source>
    </source>
</evidence>
<feature type="chain" id="PRO_0000072368" description="Synaptonemal complex protein 2">
    <location>
        <begin position="1"/>
        <end position="1505"/>
    </location>
</feature>
<feature type="region of interest" description="Disordered" evidence="3">
    <location>
        <begin position="439"/>
        <end position="483"/>
    </location>
</feature>
<feature type="region of interest" description="Disordered" evidence="3">
    <location>
        <begin position="536"/>
        <end position="571"/>
    </location>
</feature>
<feature type="region of interest" description="Disordered" evidence="3">
    <location>
        <begin position="745"/>
        <end position="764"/>
    </location>
</feature>
<feature type="region of interest" description="Disordered" evidence="3">
    <location>
        <begin position="949"/>
        <end position="974"/>
    </location>
</feature>
<feature type="region of interest" description="Disordered" evidence="3">
    <location>
        <begin position="1035"/>
        <end position="1080"/>
    </location>
</feature>
<feature type="region of interest" description="Disordered" evidence="3">
    <location>
        <begin position="1199"/>
        <end position="1239"/>
    </location>
</feature>
<feature type="coiled-coil region" evidence="2">
    <location>
        <begin position="1384"/>
        <end position="1435"/>
    </location>
</feature>
<feature type="compositionally biased region" description="Basic residues" evidence="3">
    <location>
        <begin position="748"/>
        <end position="758"/>
    </location>
</feature>
<feature type="compositionally biased region" description="Basic residues" evidence="3">
    <location>
        <begin position="953"/>
        <end position="962"/>
    </location>
</feature>
<feature type="compositionally biased region" description="Low complexity" evidence="3">
    <location>
        <begin position="1200"/>
        <end position="1209"/>
    </location>
</feature>
<feature type="compositionally biased region" description="Basic and acidic residues" evidence="3">
    <location>
        <begin position="1222"/>
        <end position="1234"/>
    </location>
</feature>
<feature type="modified residue" description="Phosphoserine" evidence="1">
    <location>
        <position position="457"/>
    </location>
</feature>
<feature type="modified residue" description="Phosphoserine" evidence="1">
    <location>
        <position position="465"/>
    </location>
</feature>
<feature type="modified residue" description="Phosphothreonine" evidence="1">
    <location>
        <position position="471"/>
    </location>
</feature>
<feature type="modified residue" description="Phosphoserine" evidence="8">
    <location>
        <position position="494"/>
    </location>
</feature>
<feature type="modified residue" description="Phosphothreonine" evidence="8">
    <location>
        <position position="503"/>
    </location>
</feature>
<feature type="modified residue" description="Phosphoserine" evidence="1">
    <location>
        <position position="507"/>
    </location>
</feature>
<feature type="modified residue" description="Phosphoserine" evidence="8">
    <location>
        <position position="516"/>
    </location>
</feature>
<feature type="modified residue" description="Phosphoserine" evidence="1">
    <location>
        <position position="525"/>
    </location>
</feature>
<feature type="modified residue" description="Phosphoserine" evidence="1">
    <location>
        <position position="534"/>
    </location>
</feature>
<feature type="modified residue" description="Phosphothreonine" evidence="1">
    <location>
        <position position="613"/>
    </location>
</feature>
<feature type="modified residue" description="Phosphothreonine" evidence="1">
    <location>
        <position position="638"/>
    </location>
</feature>
<feature type="modified residue" description="Phosphoserine" evidence="8">
    <location>
        <position position="651"/>
    </location>
</feature>
<feature type="modified residue" description="Phosphoserine" evidence="8">
    <location>
        <position position="655"/>
    </location>
</feature>
<feature type="modified residue" description="Phosphoserine" evidence="1">
    <location>
        <position position="746"/>
    </location>
</feature>
<feature type="modified residue" description="Phosphoserine" evidence="1">
    <location>
        <position position="920"/>
    </location>
</feature>
<feature type="modified residue" description="Phosphothreonine" evidence="1">
    <location>
        <position position="922"/>
    </location>
</feature>
<feature type="modified residue" description="Phosphoserine" evidence="1">
    <location>
        <position position="1121"/>
    </location>
</feature>
<feature type="modified residue" description="Phosphoserine" evidence="8">
    <location>
        <position position="1123"/>
    </location>
</feature>
<feature type="modified residue" description="Phosphoserine" evidence="8">
    <location>
        <position position="1130"/>
    </location>
</feature>
<feature type="modified residue" description="Phosphoserine" evidence="1">
    <location>
        <position position="1146"/>
    </location>
</feature>
<feature type="modified residue" description="Phosphoserine" evidence="1">
    <location>
        <position position="1150"/>
    </location>
</feature>
<feature type="modified residue" description="Phosphoserine" evidence="8">
    <location>
        <position position="1162"/>
    </location>
</feature>
<feature type="modified residue" description="Phosphoserine" evidence="1">
    <location>
        <position position="1165"/>
    </location>
</feature>
<feature type="modified residue" description="Phosphoserine" evidence="8">
    <location>
        <position position="1170"/>
    </location>
</feature>
<feature type="modified residue" description="Phosphothreonine" evidence="1">
    <location>
        <position position="1174"/>
    </location>
</feature>
<feature type="modified residue" description="Phosphoserine" evidence="1">
    <location>
        <position position="1188"/>
    </location>
</feature>
<feature type="modified residue" description="Phosphoserine" evidence="8">
    <location>
        <position position="1218"/>
    </location>
</feature>
<feature type="modified residue" description="Phosphoserine" evidence="8">
    <location>
        <position position="1221"/>
    </location>
</feature>
<feature type="modified residue" description="Phosphoserine" evidence="8">
    <location>
        <position position="1237"/>
    </location>
</feature>
<feature type="modified residue" description="Phosphoserine" evidence="8">
    <location>
        <position position="1280"/>
    </location>
</feature>
<feature type="modified residue" description="Phosphoserine" evidence="8">
    <location>
        <position position="1283"/>
    </location>
</feature>
<feature type="modified residue" description="Phosphothreonine" evidence="1">
    <location>
        <position position="1318"/>
    </location>
</feature>
<name>SYCP2_RAT</name>
<sequence length="1505" mass="172593">MPVRPDPQQLEKCIDDALRKNDFKPLVTLLQIDICEDVKIKCSKQFLRKLDDLICRELHKKDIQTISNILISIGRCSKNIFILGQTGLQTMIKQGLVQKMVSWFENSKEIILSQRQSKDEAVMNMIEDLFDLLMVVYDVNDEGKNQVLESFIPHICALVIDSRVNFCIQQEALKKMNLMLDRIPQDANKILCNQEILTLMSNMGERILDVGDYELQVGIVEALCRMTTEKRRQELAYEWFSMDFIANAFKKIKDCEFETDCRIFLNLVNGMLGDRRRVFTFPCLSAFLGKYELQIPSDEKLEEFWIDFNLGSHTLSFYIAGDDDDHQWEAVTVPEEKVDMYNIEVRESKKLLTLTLKNIVKISKKEGKELLLYFDAALEITNVTKKLFGGNKYKEFTRKQDISVAKTSIHVLFDASGSQILVPESQPSPVKENLIHLKEKSNLQKKLTNPLEPDNSSSQRDRKNSQDEITTPSRKKMSEASMIVPDTDRYTVRSPILLINTSTPRRSRAPLQAIHSAEKAVSKTSESGVDYAVSLKSRQSDGRNRGNNRANHNKTATVQNKGHEHHESPDQTFNEIEETLSDAYAVEKVDKPVLPGVLDISKNKAHSRWACWTPVTTIKLCNNQRSCALPGDTFTQDTGVNKKCTKQKSVSDDDSEETQRVKYSKDVIKCNKSEEAEVCERNIQEQNHPKYSQKKNTANAKKNDWHIESETTYKSVLLNKTTEESLIYKKTCVLSKDVNTTICDKSPSRKSMRSHTKSRKELMSEVTSCELDEIPVRENSKGKRFTGTAESLINLINKRYNSSDDMISTRKLKEPRDGSGFSKKPELQFNKVQRKSYRKLKTVVNVTSECPLNDVYNFSLNGADEPVIKLGIQEFQATTREASMDNSIKLVDVRNRDERDLSLKTKDERILSHERKTLFSDTETECGWDDSKTDISWLRKPKSKRLMDYSRNKNTKKCKSIKSRSSTEKGQPRSTVVLSKNIAKNDYEVIVDGRTRLPRRATKTKKNYKDLSTSGSESESEKEISYLFKDKLPTKEETVHSSAQTKKLPKKQQKVFNTEALKGQPSEEQKNSSTLRNGREDSLYLSSASVSGSSSSVEVMRCTEKITERDFTQDYDYITKSLSPYPKAASPEFLNRSNRVVGHGKSPRISETSAVCVRKSCSPASGLPFSPRHTTKNNSVMNIKNTNSVINNQRTQHCNSYSDVSSNSSEKLYMEPESPDSCENHVQSKREENHAASPFSLSSEKIEKIWFDMPNDNTHVSGPSQRGSKRRMYLEEDELSNPSEAEVQEAEEREHLVSKKLCQREHFDQHTSETSLSTPEFSVPKDWQQELQGAGMFYDNINSDYKRKTDTQHKIMDDFTTKTLKLTQQHLLAMACQARGHRDENIDKFQVTLLDELEKVEKDSQTLRDLEKEFVDIEEKIVHKMRAFHQSERERFRALKTSLDKSLLVYNSVYEENVLTSEMCLMKANMKMLQDKLLKEMHEEELLNIRRGLESLFKDHEGNNA</sequence>
<organism>
    <name type="scientific">Rattus norvegicus</name>
    <name type="common">Rat</name>
    <dbReference type="NCBI Taxonomy" id="10116"/>
    <lineage>
        <taxon>Eukaryota</taxon>
        <taxon>Metazoa</taxon>
        <taxon>Chordata</taxon>
        <taxon>Craniata</taxon>
        <taxon>Vertebrata</taxon>
        <taxon>Euteleostomi</taxon>
        <taxon>Mammalia</taxon>
        <taxon>Eutheria</taxon>
        <taxon>Euarchontoglires</taxon>
        <taxon>Glires</taxon>
        <taxon>Rodentia</taxon>
        <taxon>Myomorpha</taxon>
        <taxon>Muroidea</taxon>
        <taxon>Muridae</taxon>
        <taxon>Murinae</taxon>
        <taxon>Rattus</taxon>
    </lineage>
</organism>
<protein>
    <recommendedName>
        <fullName>Synaptonemal complex protein 2</fullName>
        <shortName>SCP-2</shortName>
    </recommendedName>
    <alternativeName>
        <fullName>Synaptonemal complex lateral element protein</fullName>
        <shortName>rnSCP2</shortName>
    </alternativeName>
</protein>
<proteinExistence type="evidence at protein level"/>
<keyword id="KW-0131">Cell cycle</keyword>
<keyword id="KW-0132">Cell division</keyword>
<keyword id="KW-0158">Chromosome</keyword>
<keyword id="KW-0175">Coiled coil</keyword>
<keyword id="KW-0238">DNA-binding</keyword>
<keyword id="KW-0469">Meiosis</keyword>
<keyword id="KW-0539">Nucleus</keyword>
<keyword id="KW-0597">Phosphoprotein</keyword>
<keyword id="KW-1185">Reference proteome</keyword>
<accession>O70608</accession>
<reference key="1">
    <citation type="journal article" date="1998" name="Nucleic Acids Res.">
        <title>SCP2: a major protein component of the axial elements of synaptonemal complexes of the rat.</title>
        <authorList>
            <person name="Offenberg H.H."/>
            <person name="Schalk J.A.C."/>
            <person name="Meuwissen R.L.J."/>
            <person name="van Aalderen M."/>
            <person name="Kester H.A."/>
            <person name="Dietrich A.J.J."/>
            <person name="Heyting C."/>
        </authorList>
    </citation>
    <scope>NUCLEOTIDE SEQUENCE [MRNA]</scope>
    <scope>FUNCTION</scope>
    <scope>SUBCELLULAR LOCATION</scope>
    <scope>SUBUNIT</scope>
    <scope>TISSUE SPECIFICITY</scope>
    <scope>DEVELOPMENTAL STAGE</scope>
    <source>
        <strain>Wistar</strain>
        <tissue>Testis</tissue>
    </source>
</reference>
<reference key="2">
    <citation type="journal article" date="1998" name="Chromosoma">
        <title>Localization of SCP2 and SCP3 protein molecules within synaptonemal complexes of the rat.</title>
        <authorList>
            <person name="Schalk J.A.C."/>
            <person name="Dietrich A.J.J."/>
            <person name="Vink A.C.G."/>
            <person name="Offenberg H.H."/>
            <person name="van Aalderen M."/>
            <person name="Heyting C."/>
        </authorList>
    </citation>
    <scope>SUBCELLULAR LOCATION</scope>
    <scope>SUBUNIT</scope>
    <scope>FUNCTION</scope>
    <scope>TISSUE SPECIFICITY</scope>
</reference>
<reference key="3">
    <citation type="journal article" date="2000" name="J. Cell Sci.">
        <title>Association of mammalian SMC1 and SMC3 proteins with meiotic chromosomes and synaptonemal complexes.</title>
        <authorList>
            <person name="Eijpe M."/>
            <person name="Heyting C."/>
            <person name="Gross B."/>
            <person name="Jessberger R."/>
        </authorList>
    </citation>
    <scope>INTERACTION WITH SYCP3; SMC1A AND SMC3</scope>
</reference>
<reference key="4">
    <citation type="journal article" date="2012" name="Nat. Commun.">
        <title>Quantitative maps of protein phosphorylation sites across 14 different rat organs and tissues.</title>
        <authorList>
            <person name="Lundby A."/>
            <person name="Secher A."/>
            <person name="Lage K."/>
            <person name="Nordsborg N.B."/>
            <person name="Dmytriyev A."/>
            <person name="Lundby C."/>
            <person name="Olsen J.V."/>
        </authorList>
    </citation>
    <scope>PHOSPHORYLATION [LARGE SCALE ANALYSIS] AT SER-494; THR-503; SER-516; SER-651; SER-655; SER-1123; SER-1130; SER-1162; SER-1170; SER-1218; SER-1221; SER-1237; SER-1280 AND SER-1283</scope>
    <scope>IDENTIFICATION BY MASS SPECTROMETRY [LARGE SCALE ANALYSIS]</scope>
</reference>
<dbReference type="EMBL" id="Y08981">
    <property type="protein sequence ID" value="CAA70170.1"/>
    <property type="molecule type" value="mRNA"/>
</dbReference>
<dbReference type="PIR" id="T31418">
    <property type="entry name" value="T31418"/>
</dbReference>
<dbReference type="RefSeq" id="NP_570091.1">
    <property type="nucleotide sequence ID" value="NM_130735.1"/>
</dbReference>
<dbReference type="RefSeq" id="XP_008760769.1">
    <property type="nucleotide sequence ID" value="XM_008762547.2"/>
</dbReference>
<dbReference type="RefSeq" id="XP_017447562.1">
    <property type="nucleotide sequence ID" value="XM_017592073.1"/>
</dbReference>
<dbReference type="RefSeq" id="XP_017447563.1">
    <property type="nucleotide sequence ID" value="XM_017592074.1"/>
</dbReference>
<dbReference type="RefSeq" id="XP_063140748.1">
    <property type="nucleotide sequence ID" value="XM_063284678.1"/>
</dbReference>
<dbReference type="RefSeq" id="XP_063140749.1">
    <property type="nucleotide sequence ID" value="XM_063284679.1"/>
</dbReference>
<dbReference type="RefSeq" id="XP_063140750.1">
    <property type="nucleotide sequence ID" value="XM_063284680.1"/>
</dbReference>
<dbReference type="SMR" id="O70608"/>
<dbReference type="FunCoup" id="O70608">
    <property type="interactions" value="435"/>
</dbReference>
<dbReference type="STRING" id="10116.ENSRNOP00000075596"/>
<dbReference type="iPTMnet" id="O70608"/>
<dbReference type="PhosphoSitePlus" id="O70608"/>
<dbReference type="PaxDb" id="10116-ENSRNOP00000006038"/>
<dbReference type="GeneID" id="83820"/>
<dbReference type="KEGG" id="rno:83820"/>
<dbReference type="AGR" id="RGD:69429"/>
<dbReference type="CTD" id="10388"/>
<dbReference type="RGD" id="69429">
    <property type="gene designation" value="Sycp2"/>
</dbReference>
<dbReference type="VEuPathDB" id="HostDB:ENSRNOG00000061690"/>
<dbReference type="eggNOG" id="ENOG502QVM5">
    <property type="taxonomic scope" value="Eukaryota"/>
</dbReference>
<dbReference type="HOGENOM" id="CLU_004101_0_0_1"/>
<dbReference type="InParanoid" id="O70608"/>
<dbReference type="OrthoDB" id="78257at9989"/>
<dbReference type="PRO" id="PR:O70608"/>
<dbReference type="Proteomes" id="UP000002494">
    <property type="component" value="Chromosome 3"/>
</dbReference>
<dbReference type="Bgee" id="ENSRNOG00000061690">
    <property type="expression patterns" value="Expressed in testis and 3 other cell types or tissues"/>
</dbReference>
<dbReference type="GO" id="GO:0000779">
    <property type="term" value="C:condensed chromosome, centromeric region"/>
    <property type="evidence" value="ECO:0000318"/>
    <property type="project" value="GO_Central"/>
</dbReference>
<dbReference type="GO" id="GO:0000800">
    <property type="term" value="C:lateral element"/>
    <property type="evidence" value="ECO:0000314"/>
    <property type="project" value="UniProtKB"/>
</dbReference>
<dbReference type="GO" id="GO:0000795">
    <property type="term" value="C:synaptonemal complex"/>
    <property type="evidence" value="ECO:0000314"/>
    <property type="project" value="RGD"/>
</dbReference>
<dbReference type="GO" id="GO:0003677">
    <property type="term" value="F:DNA binding"/>
    <property type="evidence" value="ECO:0007669"/>
    <property type="project" value="UniProtKB-KW"/>
</dbReference>
<dbReference type="GO" id="GO:0009887">
    <property type="term" value="P:animal organ morphogenesis"/>
    <property type="evidence" value="ECO:0000266"/>
    <property type="project" value="RGD"/>
</dbReference>
<dbReference type="GO" id="GO:0006915">
    <property type="term" value="P:apoptotic process"/>
    <property type="evidence" value="ECO:0000266"/>
    <property type="project" value="RGD"/>
</dbReference>
<dbReference type="GO" id="GO:0051301">
    <property type="term" value="P:cell division"/>
    <property type="evidence" value="ECO:0007669"/>
    <property type="project" value="UniProtKB-KW"/>
</dbReference>
<dbReference type="GO" id="GO:0035234">
    <property type="term" value="P:ectopic germ cell programmed cell death"/>
    <property type="evidence" value="ECO:0000266"/>
    <property type="project" value="RGD"/>
</dbReference>
<dbReference type="GO" id="GO:0007143">
    <property type="term" value="P:female meiotic nuclear division"/>
    <property type="evidence" value="ECO:0000266"/>
    <property type="project" value="RGD"/>
</dbReference>
<dbReference type="GO" id="GO:0009566">
    <property type="term" value="P:fertilization"/>
    <property type="evidence" value="ECO:0000266"/>
    <property type="project" value="RGD"/>
</dbReference>
<dbReference type="GO" id="GO:0048808">
    <property type="term" value="P:male genitalia morphogenesis"/>
    <property type="evidence" value="ECO:0000266"/>
    <property type="project" value="RGD"/>
</dbReference>
<dbReference type="GO" id="GO:0007140">
    <property type="term" value="P:male meiotic nuclear division"/>
    <property type="evidence" value="ECO:0000266"/>
    <property type="project" value="RGD"/>
</dbReference>
<dbReference type="GO" id="GO:0043066">
    <property type="term" value="P:negative regulation of apoptotic process"/>
    <property type="evidence" value="ECO:0000266"/>
    <property type="project" value="RGD"/>
</dbReference>
<dbReference type="GO" id="GO:0051093">
    <property type="term" value="P:negative regulation of developmental process"/>
    <property type="evidence" value="ECO:0000266"/>
    <property type="project" value="RGD"/>
</dbReference>
<dbReference type="GO" id="GO:2000242">
    <property type="term" value="P:negative regulation of reproductive process"/>
    <property type="evidence" value="ECO:0000266"/>
    <property type="project" value="RGD"/>
</dbReference>
<dbReference type="InterPro" id="IPR016024">
    <property type="entry name" value="ARM-type_fold"/>
</dbReference>
<dbReference type="InterPro" id="IPR024835">
    <property type="entry name" value="SYCP2-like"/>
</dbReference>
<dbReference type="InterPro" id="IPR041322">
    <property type="entry name" value="SYCP2_ARLD"/>
</dbReference>
<dbReference type="InterPro" id="IPR040560">
    <property type="entry name" value="SYCP2_SLD"/>
</dbReference>
<dbReference type="PANTHER" id="PTHR15607:SF12">
    <property type="entry name" value="SYNAPTONEMAL COMPLEX PROTEIN 2"/>
    <property type="match status" value="1"/>
</dbReference>
<dbReference type="PANTHER" id="PTHR15607">
    <property type="entry name" value="SYNAPTONEMAL COMPLEX PROTEIN-RELATED"/>
    <property type="match status" value="1"/>
</dbReference>
<dbReference type="Pfam" id="PF18581">
    <property type="entry name" value="SYCP2_ARLD"/>
    <property type="match status" value="1"/>
</dbReference>
<dbReference type="Pfam" id="PF18584">
    <property type="entry name" value="SYCP2_SLD"/>
    <property type="match status" value="1"/>
</dbReference>
<dbReference type="SUPFAM" id="SSF48371">
    <property type="entry name" value="ARM repeat"/>
    <property type="match status" value="1"/>
</dbReference>